<evidence type="ECO:0000255" key="1">
    <source>
        <dbReference type="HAMAP-Rule" id="MF_01708"/>
    </source>
</evidence>
<comment type="function">
    <text evidence="1">Part of the ABC transporter complex LolCDE involved in the translocation of mature outer membrane-directed lipoproteins, from the inner membrane to the periplasmic chaperone, LolA. Responsible for the formation of the LolA-lipoprotein complex in an ATP-dependent manner.</text>
</comment>
<comment type="subunit">
    <text evidence="1">The complex is composed of two ATP-binding proteins (LolD) and two transmembrane proteins (LolC and LolE).</text>
</comment>
<comment type="subcellular location">
    <subcellularLocation>
        <location evidence="1">Cell inner membrane</location>
        <topology evidence="1">Peripheral membrane protein</topology>
    </subcellularLocation>
</comment>
<comment type="similarity">
    <text evidence="1">Belongs to the ABC transporter superfamily. Lipoprotein translocase (TC 3.A.1.125) family.</text>
</comment>
<name>LOLD_SALPA</name>
<feature type="chain" id="PRO_0000272148" description="Lipoprotein-releasing system ATP-binding protein LolD">
    <location>
        <begin position="1"/>
        <end position="233"/>
    </location>
</feature>
<feature type="domain" description="ABC transporter" evidence="1">
    <location>
        <begin position="6"/>
        <end position="233"/>
    </location>
</feature>
<feature type="binding site" evidence="1">
    <location>
        <begin position="42"/>
        <end position="49"/>
    </location>
    <ligand>
        <name>ATP</name>
        <dbReference type="ChEBI" id="CHEBI:30616"/>
    </ligand>
</feature>
<accession>Q5PGR6</accession>
<sequence length="233" mass="25479">MNKILLQCDNLCKRYQEGTVQTDVLHDVSFSIGEGEMMAIVGSSGSGKSTLLHLLGGLDTPTSGDVIFSGQPMSKLSSAAKAELRNQKLGFIYQFHHLLPDFTALENVAMPLLIGKKKPAEIDARAREMLHAVGLEHRATHRPSELSGGERQRVAIARALVNNPRLVLADEPTGNLDARNADSIFELLGELNRLQGTAFLVVTHDLQLAKRMSRQLEMRDGRLTAELSLMGAE</sequence>
<reference key="1">
    <citation type="journal article" date="2004" name="Nat. Genet.">
        <title>Comparison of genome degradation in Paratyphi A and Typhi, human-restricted serovars of Salmonella enterica that cause typhoid.</title>
        <authorList>
            <person name="McClelland M."/>
            <person name="Sanderson K.E."/>
            <person name="Clifton S.W."/>
            <person name="Latreille P."/>
            <person name="Porwollik S."/>
            <person name="Sabo A."/>
            <person name="Meyer R."/>
            <person name="Bieri T."/>
            <person name="Ozersky P."/>
            <person name="McLellan M."/>
            <person name="Harkins C.R."/>
            <person name="Wang C."/>
            <person name="Nguyen C."/>
            <person name="Berghoff A."/>
            <person name="Elliott G."/>
            <person name="Kohlberg S."/>
            <person name="Strong C."/>
            <person name="Du F."/>
            <person name="Carter J."/>
            <person name="Kremizki C."/>
            <person name="Layman D."/>
            <person name="Leonard S."/>
            <person name="Sun H."/>
            <person name="Fulton L."/>
            <person name="Nash W."/>
            <person name="Miner T."/>
            <person name="Minx P."/>
            <person name="Delehaunty K."/>
            <person name="Fronick C."/>
            <person name="Magrini V."/>
            <person name="Nhan M."/>
            <person name="Warren W."/>
            <person name="Florea L."/>
            <person name="Spieth J."/>
            <person name="Wilson R.K."/>
        </authorList>
    </citation>
    <scope>NUCLEOTIDE SEQUENCE [LARGE SCALE GENOMIC DNA]</scope>
    <source>
        <strain>ATCC 9150 / SARB42</strain>
    </source>
</reference>
<keyword id="KW-0067">ATP-binding</keyword>
<keyword id="KW-0997">Cell inner membrane</keyword>
<keyword id="KW-1003">Cell membrane</keyword>
<keyword id="KW-0472">Membrane</keyword>
<keyword id="KW-0547">Nucleotide-binding</keyword>
<keyword id="KW-1278">Translocase</keyword>
<keyword id="KW-0813">Transport</keyword>
<proteinExistence type="inferred from homology"/>
<dbReference type="EC" id="7.6.2.-" evidence="1"/>
<dbReference type="EMBL" id="CP000026">
    <property type="protein sequence ID" value="AAV77559.1"/>
    <property type="molecule type" value="Genomic_DNA"/>
</dbReference>
<dbReference type="RefSeq" id="WP_001033714.1">
    <property type="nucleotide sequence ID" value="NC_006511.1"/>
</dbReference>
<dbReference type="SMR" id="Q5PGR6"/>
<dbReference type="KEGG" id="spt:SPA1632"/>
<dbReference type="HOGENOM" id="CLU_000604_1_22_6"/>
<dbReference type="Proteomes" id="UP000008185">
    <property type="component" value="Chromosome"/>
</dbReference>
<dbReference type="GO" id="GO:0005886">
    <property type="term" value="C:plasma membrane"/>
    <property type="evidence" value="ECO:0007669"/>
    <property type="project" value="UniProtKB-SubCell"/>
</dbReference>
<dbReference type="GO" id="GO:0005524">
    <property type="term" value="F:ATP binding"/>
    <property type="evidence" value="ECO:0007669"/>
    <property type="project" value="UniProtKB-KW"/>
</dbReference>
<dbReference type="GO" id="GO:0016887">
    <property type="term" value="F:ATP hydrolysis activity"/>
    <property type="evidence" value="ECO:0007669"/>
    <property type="project" value="InterPro"/>
</dbReference>
<dbReference type="GO" id="GO:0022857">
    <property type="term" value="F:transmembrane transporter activity"/>
    <property type="evidence" value="ECO:0007669"/>
    <property type="project" value="TreeGrafter"/>
</dbReference>
<dbReference type="GO" id="GO:0044874">
    <property type="term" value="P:lipoprotein localization to outer membrane"/>
    <property type="evidence" value="ECO:0007669"/>
    <property type="project" value="TreeGrafter"/>
</dbReference>
<dbReference type="GO" id="GO:0089705">
    <property type="term" value="P:protein localization to outer membrane"/>
    <property type="evidence" value="ECO:0007669"/>
    <property type="project" value="TreeGrafter"/>
</dbReference>
<dbReference type="CDD" id="cd03255">
    <property type="entry name" value="ABC_MJ0796_LolCDE_FtsE"/>
    <property type="match status" value="1"/>
</dbReference>
<dbReference type="FunFam" id="3.40.50.300:FF:000230">
    <property type="entry name" value="Lipoprotein-releasing system ATP-binding protein LolD"/>
    <property type="match status" value="1"/>
</dbReference>
<dbReference type="Gene3D" id="3.40.50.300">
    <property type="entry name" value="P-loop containing nucleotide triphosphate hydrolases"/>
    <property type="match status" value="1"/>
</dbReference>
<dbReference type="InterPro" id="IPR003593">
    <property type="entry name" value="AAA+_ATPase"/>
</dbReference>
<dbReference type="InterPro" id="IPR003439">
    <property type="entry name" value="ABC_transporter-like_ATP-bd"/>
</dbReference>
<dbReference type="InterPro" id="IPR017871">
    <property type="entry name" value="ABC_transporter-like_CS"/>
</dbReference>
<dbReference type="InterPro" id="IPR015854">
    <property type="entry name" value="ABC_transpr_LolD-like"/>
</dbReference>
<dbReference type="InterPro" id="IPR011924">
    <property type="entry name" value="LolD_lipo_ATP-bd"/>
</dbReference>
<dbReference type="InterPro" id="IPR017911">
    <property type="entry name" value="MacB-like_ATP-bd"/>
</dbReference>
<dbReference type="InterPro" id="IPR027417">
    <property type="entry name" value="P-loop_NTPase"/>
</dbReference>
<dbReference type="NCBIfam" id="TIGR02211">
    <property type="entry name" value="LolD_lipo_ex"/>
    <property type="match status" value="1"/>
</dbReference>
<dbReference type="NCBIfam" id="NF008639">
    <property type="entry name" value="PRK11629.1"/>
    <property type="match status" value="1"/>
</dbReference>
<dbReference type="PANTHER" id="PTHR24220">
    <property type="entry name" value="IMPORT ATP-BINDING PROTEIN"/>
    <property type="match status" value="1"/>
</dbReference>
<dbReference type="PANTHER" id="PTHR24220:SF689">
    <property type="entry name" value="LIPOPROTEIN-RELEASING SYSTEM ATP-BINDING PROTEIN LOLD"/>
    <property type="match status" value="1"/>
</dbReference>
<dbReference type="Pfam" id="PF00005">
    <property type="entry name" value="ABC_tran"/>
    <property type="match status" value="1"/>
</dbReference>
<dbReference type="SMART" id="SM00382">
    <property type="entry name" value="AAA"/>
    <property type="match status" value="1"/>
</dbReference>
<dbReference type="SUPFAM" id="SSF52540">
    <property type="entry name" value="P-loop containing nucleoside triphosphate hydrolases"/>
    <property type="match status" value="1"/>
</dbReference>
<dbReference type="PROSITE" id="PS00211">
    <property type="entry name" value="ABC_TRANSPORTER_1"/>
    <property type="match status" value="1"/>
</dbReference>
<dbReference type="PROSITE" id="PS50893">
    <property type="entry name" value="ABC_TRANSPORTER_2"/>
    <property type="match status" value="1"/>
</dbReference>
<dbReference type="PROSITE" id="PS51244">
    <property type="entry name" value="LOLD"/>
    <property type="match status" value="1"/>
</dbReference>
<protein>
    <recommendedName>
        <fullName evidence="1">Lipoprotein-releasing system ATP-binding protein LolD</fullName>
        <ecNumber evidence="1">7.6.2.-</ecNumber>
    </recommendedName>
</protein>
<gene>
    <name evidence="1" type="primary">lolD</name>
    <name type="ordered locus">SPA1632</name>
</gene>
<organism>
    <name type="scientific">Salmonella paratyphi A (strain ATCC 9150 / SARB42)</name>
    <dbReference type="NCBI Taxonomy" id="295319"/>
    <lineage>
        <taxon>Bacteria</taxon>
        <taxon>Pseudomonadati</taxon>
        <taxon>Pseudomonadota</taxon>
        <taxon>Gammaproteobacteria</taxon>
        <taxon>Enterobacterales</taxon>
        <taxon>Enterobacteriaceae</taxon>
        <taxon>Salmonella</taxon>
    </lineage>
</organism>